<comment type="function">
    <text evidence="1">Catalyzes the oxidation of 5,10-methylenetetrahydrofolate to 5,10-methenyltetrahydrofolate and then the hydrolysis of 5,10-methenyltetrahydrofolate to 10-formyltetrahydrofolate.</text>
</comment>
<comment type="catalytic activity">
    <reaction evidence="1">
        <text>(6R)-5,10-methylene-5,6,7,8-tetrahydrofolate + NADP(+) = (6R)-5,10-methenyltetrahydrofolate + NADPH</text>
        <dbReference type="Rhea" id="RHEA:22812"/>
        <dbReference type="ChEBI" id="CHEBI:15636"/>
        <dbReference type="ChEBI" id="CHEBI:57455"/>
        <dbReference type="ChEBI" id="CHEBI:57783"/>
        <dbReference type="ChEBI" id="CHEBI:58349"/>
        <dbReference type="EC" id="1.5.1.5"/>
    </reaction>
</comment>
<comment type="catalytic activity">
    <reaction evidence="1">
        <text>(6R)-5,10-methenyltetrahydrofolate + H2O = (6R)-10-formyltetrahydrofolate + H(+)</text>
        <dbReference type="Rhea" id="RHEA:23700"/>
        <dbReference type="ChEBI" id="CHEBI:15377"/>
        <dbReference type="ChEBI" id="CHEBI:15378"/>
        <dbReference type="ChEBI" id="CHEBI:57455"/>
        <dbReference type="ChEBI" id="CHEBI:195366"/>
        <dbReference type="EC" id="3.5.4.9"/>
    </reaction>
</comment>
<comment type="pathway">
    <text evidence="1">One-carbon metabolism; tetrahydrofolate interconversion.</text>
</comment>
<comment type="subunit">
    <text evidence="1">Homodimer.</text>
</comment>
<comment type="similarity">
    <text evidence="1">Belongs to the tetrahydrofolate dehydrogenase/cyclohydrolase family.</text>
</comment>
<sequence length="283" mass="30620">MTATIIDGKETAKEKREQLAKEVEELKAQGVVPGLAVILIGDDPASVSYVTGKKKAAETMGMKFKLDRFDSSLTEAELLTVIDQYNQNPEFHGILVQLPLPDHISEKAVIERISPDKDVDGFHPLNVGKMLLGEDTFLPCTPHGIVELLKKTNVDLSGKEVVVVGRSNIVGKPVGQLLLNENATVTYCHSRTKNMSEHTKKADILVVAVGKANFIKADQIKEGAIVIDVGVNRLESGKLCGDVQFDEAKEKASFITPVPGGVGPMTITMLAHNTVKSARRTLS</sequence>
<gene>
    <name evidence="1" type="primary">folD</name>
    <name type="ordered locus">RBAM_022640</name>
</gene>
<feature type="chain" id="PRO_1000069227" description="Bifunctional protein FolD">
    <location>
        <begin position="1"/>
        <end position="283"/>
    </location>
</feature>
<feature type="binding site" evidence="1">
    <location>
        <begin position="165"/>
        <end position="167"/>
    </location>
    <ligand>
        <name>NADP(+)</name>
        <dbReference type="ChEBI" id="CHEBI:58349"/>
    </ligand>
</feature>
<feature type="binding site" evidence="1">
    <location>
        <position position="190"/>
    </location>
    <ligand>
        <name>NADP(+)</name>
        <dbReference type="ChEBI" id="CHEBI:58349"/>
    </ligand>
</feature>
<feature type="binding site" evidence="1">
    <location>
        <position position="231"/>
    </location>
    <ligand>
        <name>NADP(+)</name>
        <dbReference type="ChEBI" id="CHEBI:58349"/>
    </ligand>
</feature>
<dbReference type="EC" id="1.5.1.5" evidence="1"/>
<dbReference type="EC" id="3.5.4.9" evidence="1"/>
<dbReference type="EMBL" id="CP000560">
    <property type="protein sequence ID" value="ABS74625.1"/>
    <property type="molecule type" value="Genomic_DNA"/>
</dbReference>
<dbReference type="RefSeq" id="WP_007408350.1">
    <property type="nucleotide sequence ID" value="NC_009725.2"/>
</dbReference>
<dbReference type="SMR" id="A7Z6J9"/>
<dbReference type="GeneID" id="93081402"/>
<dbReference type="KEGG" id="bay:RBAM_022640"/>
<dbReference type="HOGENOM" id="CLU_034045_2_1_9"/>
<dbReference type="UniPathway" id="UPA00193"/>
<dbReference type="Proteomes" id="UP000001120">
    <property type="component" value="Chromosome"/>
</dbReference>
<dbReference type="GO" id="GO:0005829">
    <property type="term" value="C:cytosol"/>
    <property type="evidence" value="ECO:0007669"/>
    <property type="project" value="TreeGrafter"/>
</dbReference>
<dbReference type="GO" id="GO:0004477">
    <property type="term" value="F:methenyltetrahydrofolate cyclohydrolase activity"/>
    <property type="evidence" value="ECO:0007669"/>
    <property type="project" value="UniProtKB-UniRule"/>
</dbReference>
<dbReference type="GO" id="GO:0004488">
    <property type="term" value="F:methylenetetrahydrofolate dehydrogenase (NADP+) activity"/>
    <property type="evidence" value="ECO:0007669"/>
    <property type="project" value="UniProtKB-UniRule"/>
</dbReference>
<dbReference type="GO" id="GO:0000105">
    <property type="term" value="P:L-histidine biosynthetic process"/>
    <property type="evidence" value="ECO:0007669"/>
    <property type="project" value="UniProtKB-KW"/>
</dbReference>
<dbReference type="GO" id="GO:0009086">
    <property type="term" value="P:methionine biosynthetic process"/>
    <property type="evidence" value="ECO:0007669"/>
    <property type="project" value="UniProtKB-KW"/>
</dbReference>
<dbReference type="GO" id="GO:0006164">
    <property type="term" value="P:purine nucleotide biosynthetic process"/>
    <property type="evidence" value="ECO:0007669"/>
    <property type="project" value="UniProtKB-KW"/>
</dbReference>
<dbReference type="GO" id="GO:0035999">
    <property type="term" value="P:tetrahydrofolate interconversion"/>
    <property type="evidence" value="ECO:0007669"/>
    <property type="project" value="UniProtKB-UniRule"/>
</dbReference>
<dbReference type="CDD" id="cd01080">
    <property type="entry name" value="NAD_bind_m-THF_DH_Cyclohyd"/>
    <property type="match status" value="1"/>
</dbReference>
<dbReference type="FunFam" id="3.40.50.720:FF:000094">
    <property type="entry name" value="Bifunctional protein FolD"/>
    <property type="match status" value="1"/>
</dbReference>
<dbReference type="FunFam" id="3.40.50.10860:FF:000005">
    <property type="entry name" value="C-1-tetrahydrofolate synthase, cytoplasmic, putative"/>
    <property type="match status" value="1"/>
</dbReference>
<dbReference type="Gene3D" id="3.40.50.10860">
    <property type="entry name" value="Leucine Dehydrogenase, chain A, domain 1"/>
    <property type="match status" value="1"/>
</dbReference>
<dbReference type="Gene3D" id="3.40.50.720">
    <property type="entry name" value="NAD(P)-binding Rossmann-like Domain"/>
    <property type="match status" value="1"/>
</dbReference>
<dbReference type="HAMAP" id="MF_01576">
    <property type="entry name" value="THF_DHG_CYH"/>
    <property type="match status" value="1"/>
</dbReference>
<dbReference type="InterPro" id="IPR046346">
    <property type="entry name" value="Aminoacid_DH-like_N_sf"/>
</dbReference>
<dbReference type="InterPro" id="IPR036291">
    <property type="entry name" value="NAD(P)-bd_dom_sf"/>
</dbReference>
<dbReference type="InterPro" id="IPR000672">
    <property type="entry name" value="THF_DH/CycHdrlase"/>
</dbReference>
<dbReference type="InterPro" id="IPR020630">
    <property type="entry name" value="THF_DH/CycHdrlase_cat_dom"/>
</dbReference>
<dbReference type="InterPro" id="IPR020867">
    <property type="entry name" value="THF_DH/CycHdrlase_CS"/>
</dbReference>
<dbReference type="InterPro" id="IPR020631">
    <property type="entry name" value="THF_DH/CycHdrlase_NAD-bd_dom"/>
</dbReference>
<dbReference type="NCBIfam" id="NF008058">
    <property type="entry name" value="PRK10792.1"/>
    <property type="match status" value="1"/>
</dbReference>
<dbReference type="NCBIfam" id="NF010783">
    <property type="entry name" value="PRK14186.1"/>
    <property type="match status" value="1"/>
</dbReference>
<dbReference type="PANTHER" id="PTHR48099:SF5">
    <property type="entry name" value="C-1-TETRAHYDROFOLATE SYNTHASE, CYTOPLASMIC"/>
    <property type="match status" value="1"/>
</dbReference>
<dbReference type="PANTHER" id="PTHR48099">
    <property type="entry name" value="C-1-TETRAHYDROFOLATE SYNTHASE, CYTOPLASMIC-RELATED"/>
    <property type="match status" value="1"/>
</dbReference>
<dbReference type="Pfam" id="PF00763">
    <property type="entry name" value="THF_DHG_CYH"/>
    <property type="match status" value="1"/>
</dbReference>
<dbReference type="Pfam" id="PF02882">
    <property type="entry name" value="THF_DHG_CYH_C"/>
    <property type="match status" value="1"/>
</dbReference>
<dbReference type="PRINTS" id="PR00085">
    <property type="entry name" value="THFDHDRGNASE"/>
</dbReference>
<dbReference type="SUPFAM" id="SSF53223">
    <property type="entry name" value="Aminoacid dehydrogenase-like, N-terminal domain"/>
    <property type="match status" value="1"/>
</dbReference>
<dbReference type="SUPFAM" id="SSF51735">
    <property type="entry name" value="NAD(P)-binding Rossmann-fold domains"/>
    <property type="match status" value="1"/>
</dbReference>
<dbReference type="PROSITE" id="PS00766">
    <property type="entry name" value="THF_DHG_CYH_1"/>
    <property type="match status" value="1"/>
</dbReference>
<dbReference type="PROSITE" id="PS00767">
    <property type="entry name" value="THF_DHG_CYH_2"/>
    <property type="match status" value="1"/>
</dbReference>
<protein>
    <recommendedName>
        <fullName evidence="1">Bifunctional protein FolD</fullName>
    </recommendedName>
    <domain>
        <recommendedName>
            <fullName evidence="1">Methylenetetrahydrofolate dehydrogenase</fullName>
            <ecNumber evidence="1">1.5.1.5</ecNumber>
        </recommendedName>
    </domain>
    <domain>
        <recommendedName>
            <fullName evidence="1">Methenyltetrahydrofolate cyclohydrolase</fullName>
            <ecNumber evidence="1">3.5.4.9</ecNumber>
        </recommendedName>
    </domain>
</protein>
<name>FOLD_BACVZ</name>
<accession>A7Z6J9</accession>
<organism>
    <name type="scientific">Bacillus velezensis (strain DSM 23117 / BGSC 10A6 / LMG 26770 / FZB42)</name>
    <name type="common">Bacillus amyloliquefaciens subsp. plantarum</name>
    <dbReference type="NCBI Taxonomy" id="326423"/>
    <lineage>
        <taxon>Bacteria</taxon>
        <taxon>Bacillati</taxon>
        <taxon>Bacillota</taxon>
        <taxon>Bacilli</taxon>
        <taxon>Bacillales</taxon>
        <taxon>Bacillaceae</taxon>
        <taxon>Bacillus</taxon>
        <taxon>Bacillus amyloliquefaciens group</taxon>
    </lineage>
</organism>
<keyword id="KW-0028">Amino-acid biosynthesis</keyword>
<keyword id="KW-0368">Histidine biosynthesis</keyword>
<keyword id="KW-0378">Hydrolase</keyword>
<keyword id="KW-0486">Methionine biosynthesis</keyword>
<keyword id="KW-0511">Multifunctional enzyme</keyword>
<keyword id="KW-0521">NADP</keyword>
<keyword id="KW-0554">One-carbon metabolism</keyword>
<keyword id="KW-0560">Oxidoreductase</keyword>
<keyword id="KW-0658">Purine biosynthesis</keyword>
<proteinExistence type="inferred from homology"/>
<reference key="1">
    <citation type="journal article" date="2007" name="Nat. Biotechnol.">
        <title>Comparative analysis of the complete genome sequence of the plant growth-promoting bacterium Bacillus amyloliquefaciens FZB42.</title>
        <authorList>
            <person name="Chen X.H."/>
            <person name="Koumoutsi A."/>
            <person name="Scholz R."/>
            <person name="Eisenreich A."/>
            <person name="Schneider K."/>
            <person name="Heinemeyer I."/>
            <person name="Morgenstern B."/>
            <person name="Voss B."/>
            <person name="Hess W.R."/>
            <person name="Reva O."/>
            <person name="Junge H."/>
            <person name="Voigt B."/>
            <person name="Jungblut P.R."/>
            <person name="Vater J."/>
            <person name="Suessmuth R."/>
            <person name="Liesegang H."/>
            <person name="Strittmatter A."/>
            <person name="Gottschalk G."/>
            <person name="Borriss R."/>
        </authorList>
    </citation>
    <scope>NUCLEOTIDE SEQUENCE [LARGE SCALE GENOMIC DNA]</scope>
    <source>
        <strain>DSM 23117 / BGSC 10A6 / LMG 26770 / FZB42</strain>
    </source>
</reference>
<evidence type="ECO:0000255" key="1">
    <source>
        <dbReference type="HAMAP-Rule" id="MF_01576"/>
    </source>
</evidence>